<keyword id="KW-0560">Oxidoreductase</keyword>
<evidence type="ECO:0000255" key="1">
    <source>
        <dbReference type="HAMAP-Rule" id="MF_01401"/>
    </source>
</evidence>
<feature type="chain" id="PRO_1000073504" description="Peptide methionine sulfoxide reductase MsrA">
    <location>
        <begin position="1"/>
        <end position="212"/>
    </location>
</feature>
<feature type="active site" evidence="1">
    <location>
        <position position="51"/>
    </location>
</feature>
<protein>
    <recommendedName>
        <fullName evidence="1">Peptide methionine sulfoxide reductase MsrA</fullName>
        <shortName evidence="1">Protein-methionine-S-oxide reductase</shortName>
        <ecNumber evidence="1">1.8.4.11</ecNumber>
    </recommendedName>
    <alternativeName>
        <fullName evidence="1">Peptide-methionine (S)-S-oxide reductase</fullName>
        <shortName evidence="1">Peptide Met(O) reductase</shortName>
    </alternativeName>
</protein>
<accession>A5F587</accession>
<accession>C3M537</accession>
<name>MSRA_VIBC3</name>
<sequence length="212" mass="23360">MLDKQTMVTAHNALPGRTTAMSIDDTHFVNGSSLTAAPQSGQQQILIGMGCFWGAERLFWQLDGVISTSVGYSGGFTPNPTYEEVCSGKTGHTEVVRVIFDPERLPLTELLRAFWERHDPTQGMRQGNDRGTQYRSAIYTFSEDQREIAEASKAAYQALLTAQHRPSITTEILPAGAYYFAETYHQQYLAKNPNGYCGLGGTGVCFPPHSTL</sequence>
<reference key="1">
    <citation type="submission" date="2007-03" db="EMBL/GenBank/DDBJ databases">
        <authorList>
            <person name="Heidelberg J."/>
        </authorList>
    </citation>
    <scope>NUCLEOTIDE SEQUENCE [LARGE SCALE GENOMIC DNA]</scope>
    <source>
        <strain>ATCC 39541 / Classical Ogawa 395 / O395</strain>
    </source>
</reference>
<reference key="2">
    <citation type="journal article" date="2008" name="PLoS ONE">
        <title>A recalibrated molecular clock and independent origins for the cholera pandemic clones.</title>
        <authorList>
            <person name="Feng L."/>
            <person name="Reeves P.R."/>
            <person name="Lan R."/>
            <person name="Ren Y."/>
            <person name="Gao C."/>
            <person name="Zhou Z."/>
            <person name="Ren Y."/>
            <person name="Cheng J."/>
            <person name="Wang W."/>
            <person name="Wang J."/>
            <person name="Qian W."/>
            <person name="Li D."/>
            <person name="Wang L."/>
        </authorList>
    </citation>
    <scope>NUCLEOTIDE SEQUENCE [LARGE SCALE GENOMIC DNA]</scope>
    <source>
        <strain>ATCC 39541 / Classical Ogawa 395 / O395</strain>
    </source>
</reference>
<dbReference type="EC" id="1.8.4.11" evidence="1"/>
<dbReference type="EMBL" id="CP000627">
    <property type="protein sequence ID" value="ABQ19479.1"/>
    <property type="molecule type" value="Genomic_DNA"/>
</dbReference>
<dbReference type="EMBL" id="CP001235">
    <property type="protein sequence ID" value="ACP10648.1"/>
    <property type="molecule type" value="Genomic_DNA"/>
</dbReference>
<dbReference type="RefSeq" id="WP_000884809.1">
    <property type="nucleotide sequence ID" value="NZ_JAACZH010000021.1"/>
</dbReference>
<dbReference type="SMR" id="A5F587"/>
<dbReference type="GeneID" id="69718846"/>
<dbReference type="KEGG" id="vco:VC0395_A2127"/>
<dbReference type="KEGG" id="vcr:VC395_2662"/>
<dbReference type="PATRIC" id="fig|345073.21.peg.2561"/>
<dbReference type="eggNOG" id="COG0225">
    <property type="taxonomic scope" value="Bacteria"/>
</dbReference>
<dbReference type="HOGENOM" id="CLU_031040_10_3_6"/>
<dbReference type="OrthoDB" id="4174719at2"/>
<dbReference type="Proteomes" id="UP000000249">
    <property type="component" value="Chromosome 2"/>
</dbReference>
<dbReference type="GO" id="GO:0005737">
    <property type="term" value="C:cytoplasm"/>
    <property type="evidence" value="ECO:0007669"/>
    <property type="project" value="TreeGrafter"/>
</dbReference>
<dbReference type="GO" id="GO:0036456">
    <property type="term" value="F:L-methionine-(S)-S-oxide reductase activity"/>
    <property type="evidence" value="ECO:0007669"/>
    <property type="project" value="TreeGrafter"/>
</dbReference>
<dbReference type="GO" id="GO:0008113">
    <property type="term" value="F:peptide-methionine (S)-S-oxide reductase activity"/>
    <property type="evidence" value="ECO:0007669"/>
    <property type="project" value="UniProtKB-UniRule"/>
</dbReference>
<dbReference type="GO" id="GO:0034599">
    <property type="term" value="P:cellular response to oxidative stress"/>
    <property type="evidence" value="ECO:0007669"/>
    <property type="project" value="TreeGrafter"/>
</dbReference>
<dbReference type="GO" id="GO:0036211">
    <property type="term" value="P:protein modification process"/>
    <property type="evidence" value="ECO:0007669"/>
    <property type="project" value="UniProtKB-UniRule"/>
</dbReference>
<dbReference type="FunFam" id="3.30.1060.10:FF:000001">
    <property type="entry name" value="Peptide methionine sulfoxide reductase MsrA"/>
    <property type="match status" value="1"/>
</dbReference>
<dbReference type="Gene3D" id="3.30.1060.10">
    <property type="entry name" value="Peptide methionine sulphoxide reductase MsrA"/>
    <property type="match status" value="1"/>
</dbReference>
<dbReference type="HAMAP" id="MF_01401">
    <property type="entry name" value="MsrA"/>
    <property type="match status" value="1"/>
</dbReference>
<dbReference type="InterPro" id="IPR002569">
    <property type="entry name" value="Met_Sox_Rdtase_MsrA_dom"/>
</dbReference>
<dbReference type="InterPro" id="IPR036509">
    <property type="entry name" value="Met_Sox_Rdtase_MsrA_sf"/>
</dbReference>
<dbReference type="InterPro" id="IPR050162">
    <property type="entry name" value="MsrA_MetSO_reductase"/>
</dbReference>
<dbReference type="NCBIfam" id="TIGR00401">
    <property type="entry name" value="msrA"/>
    <property type="match status" value="1"/>
</dbReference>
<dbReference type="PANTHER" id="PTHR42799">
    <property type="entry name" value="MITOCHONDRIAL PEPTIDE METHIONINE SULFOXIDE REDUCTASE"/>
    <property type="match status" value="1"/>
</dbReference>
<dbReference type="PANTHER" id="PTHR42799:SF2">
    <property type="entry name" value="MITOCHONDRIAL PEPTIDE METHIONINE SULFOXIDE REDUCTASE"/>
    <property type="match status" value="1"/>
</dbReference>
<dbReference type="Pfam" id="PF01625">
    <property type="entry name" value="PMSR"/>
    <property type="match status" value="1"/>
</dbReference>
<dbReference type="SUPFAM" id="SSF55068">
    <property type="entry name" value="Peptide methionine sulfoxide reductase"/>
    <property type="match status" value="1"/>
</dbReference>
<proteinExistence type="inferred from homology"/>
<organism>
    <name type="scientific">Vibrio cholerae serotype O1 (strain ATCC 39541 / Classical Ogawa 395 / O395)</name>
    <dbReference type="NCBI Taxonomy" id="345073"/>
    <lineage>
        <taxon>Bacteria</taxon>
        <taxon>Pseudomonadati</taxon>
        <taxon>Pseudomonadota</taxon>
        <taxon>Gammaproteobacteria</taxon>
        <taxon>Vibrionales</taxon>
        <taxon>Vibrionaceae</taxon>
        <taxon>Vibrio</taxon>
    </lineage>
</organism>
<gene>
    <name evidence="1" type="primary">msrA</name>
    <name type="ordered locus">VC0395_A2127</name>
    <name type="ordered locus">VC395_2662</name>
</gene>
<comment type="function">
    <text evidence="1">Has an important function as a repair enzyme for proteins that have been inactivated by oxidation. Catalyzes the reversible oxidation-reduction of methionine sulfoxide in proteins to methionine.</text>
</comment>
<comment type="catalytic activity">
    <reaction evidence="1">
        <text>L-methionyl-[protein] + [thioredoxin]-disulfide + H2O = L-methionyl-(S)-S-oxide-[protein] + [thioredoxin]-dithiol</text>
        <dbReference type="Rhea" id="RHEA:14217"/>
        <dbReference type="Rhea" id="RHEA-COMP:10698"/>
        <dbReference type="Rhea" id="RHEA-COMP:10700"/>
        <dbReference type="Rhea" id="RHEA-COMP:12313"/>
        <dbReference type="Rhea" id="RHEA-COMP:12315"/>
        <dbReference type="ChEBI" id="CHEBI:15377"/>
        <dbReference type="ChEBI" id="CHEBI:16044"/>
        <dbReference type="ChEBI" id="CHEBI:29950"/>
        <dbReference type="ChEBI" id="CHEBI:44120"/>
        <dbReference type="ChEBI" id="CHEBI:50058"/>
        <dbReference type="EC" id="1.8.4.11"/>
    </reaction>
</comment>
<comment type="catalytic activity">
    <reaction evidence="1">
        <text>[thioredoxin]-disulfide + L-methionine + H2O = L-methionine (S)-S-oxide + [thioredoxin]-dithiol</text>
        <dbReference type="Rhea" id="RHEA:19993"/>
        <dbReference type="Rhea" id="RHEA-COMP:10698"/>
        <dbReference type="Rhea" id="RHEA-COMP:10700"/>
        <dbReference type="ChEBI" id="CHEBI:15377"/>
        <dbReference type="ChEBI" id="CHEBI:29950"/>
        <dbReference type="ChEBI" id="CHEBI:50058"/>
        <dbReference type="ChEBI" id="CHEBI:57844"/>
        <dbReference type="ChEBI" id="CHEBI:58772"/>
        <dbReference type="EC" id="1.8.4.11"/>
    </reaction>
</comment>
<comment type="similarity">
    <text evidence="1">Belongs to the MsrA Met sulfoxide reductase family.</text>
</comment>